<name>FABH_CLOP1</name>
<keyword id="KW-0012">Acyltransferase</keyword>
<keyword id="KW-0963">Cytoplasm</keyword>
<keyword id="KW-0275">Fatty acid biosynthesis</keyword>
<keyword id="KW-0276">Fatty acid metabolism</keyword>
<keyword id="KW-0444">Lipid biosynthesis</keyword>
<keyword id="KW-0443">Lipid metabolism</keyword>
<keyword id="KW-0511">Multifunctional enzyme</keyword>
<keyword id="KW-0808">Transferase</keyword>
<sequence>MKNAKMIGFGLYTPKNLVENERLQEFLETSDEWIRTRTGIERRYISLDENTSDLAVEASKKALNQAGLSAEDIDLIILATVTPDNFTPSTACIVQDKLGAKNAWAFDINAACTGFIYALKLGRSLIRSGEAKNALIIGAETLSKALNWEDRGSCVLFGDGAGATVLTSTEEDCGIKCVNVKSDGSKGDSLVIQGLPLNSPFKDGREVSENYINMNGREIFKFATKVMEESIVEILEKENIKIEDIDAIIPHQANLRIIDYVVKRLGIPREKFITNLQNYGNTSGASIPIALCESINEGNLKKGDNIIMVGFGGGLTWGAALIKL</sequence>
<comment type="function">
    <text evidence="1">Catalyzes the condensation reaction of fatty acid synthesis by the addition to an acyl acceptor of two carbons from malonyl-ACP. Catalyzes the first condensation reaction which initiates fatty acid synthesis and may therefore play a role in governing the total rate of fatty acid production. Possesses both acetoacetyl-ACP synthase and acetyl transacylase activities. Its substrate specificity determines the biosynthesis of branched-chain and/or straight-chain of fatty acids.</text>
</comment>
<comment type="catalytic activity">
    <reaction evidence="1">
        <text>malonyl-[ACP] + acetyl-CoA + H(+) = 3-oxobutanoyl-[ACP] + CO2 + CoA</text>
        <dbReference type="Rhea" id="RHEA:12080"/>
        <dbReference type="Rhea" id="RHEA-COMP:9623"/>
        <dbReference type="Rhea" id="RHEA-COMP:9625"/>
        <dbReference type="ChEBI" id="CHEBI:15378"/>
        <dbReference type="ChEBI" id="CHEBI:16526"/>
        <dbReference type="ChEBI" id="CHEBI:57287"/>
        <dbReference type="ChEBI" id="CHEBI:57288"/>
        <dbReference type="ChEBI" id="CHEBI:78449"/>
        <dbReference type="ChEBI" id="CHEBI:78450"/>
        <dbReference type="EC" id="2.3.1.180"/>
    </reaction>
</comment>
<comment type="pathway">
    <text evidence="1">Lipid metabolism; fatty acid biosynthesis.</text>
</comment>
<comment type="subunit">
    <text evidence="1">Homodimer.</text>
</comment>
<comment type="subcellular location">
    <subcellularLocation>
        <location evidence="1">Cytoplasm</location>
    </subcellularLocation>
</comment>
<comment type="domain">
    <text evidence="1">The last Arg residue of the ACP-binding site is essential for the weak association between ACP/AcpP and FabH.</text>
</comment>
<comment type="similarity">
    <text evidence="1">Belongs to the thiolase-like superfamily. FabH family.</text>
</comment>
<proteinExistence type="inferred from homology"/>
<evidence type="ECO:0000255" key="1">
    <source>
        <dbReference type="HAMAP-Rule" id="MF_01815"/>
    </source>
</evidence>
<dbReference type="EC" id="2.3.1.180" evidence="1"/>
<dbReference type="EMBL" id="CP000246">
    <property type="protein sequence ID" value="ABG83519.1"/>
    <property type="molecule type" value="Genomic_DNA"/>
</dbReference>
<dbReference type="RefSeq" id="WP_011590666.1">
    <property type="nucleotide sequence ID" value="NC_008261.1"/>
</dbReference>
<dbReference type="SMR" id="Q0TRH0"/>
<dbReference type="STRING" id="195103.CPF_1324"/>
<dbReference type="PaxDb" id="195103-CPF_1324"/>
<dbReference type="KEGG" id="cpf:CPF_1324"/>
<dbReference type="eggNOG" id="COG0332">
    <property type="taxonomic scope" value="Bacteria"/>
</dbReference>
<dbReference type="HOGENOM" id="CLU_039592_3_1_9"/>
<dbReference type="UniPathway" id="UPA00094"/>
<dbReference type="Proteomes" id="UP000001823">
    <property type="component" value="Chromosome"/>
</dbReference>
<dbReference type="GO" id="GO:0005737">
    <property type="term" value="C:cytoplasm"/>
    <property type="evidence" value="ECO:0007669"/>
    <property type="project" value="UniProtKB-SubCell"/>
</dbReference>
<dbReference type="GO" id="GO:0004315">
    <property type="term" value="F:3-oxoacyl-[acyl-carrier-protein] synthase activity"/>
    <property type="evidence" value="ECO:0007669"/>
    <property type="project" value="InterPro"/>
</dbReference>
<dbReference type="GO" id="GO:0033818">
    <property type="term" value="F:beta-ketoacyl-acyl-carrier-protein synthase III activity"/>
    <property type="evidence" value="ECO:0007669"/>
    <property type="project" value="UniProtKB-UniRule"/>
</dbReference>
<dbReference type="GO" id="GO:0006633">
    <property type="term" value="P:fatty acid biosynthetic process"/>
    <property type="evidence" value="ECO:0007669"/>
    <property type="project" value="UniProtKB-UniRule"/>
</dbReference>
<dbReference type="CDD" id="cd00830">
    <property type="entry name" value="KAS_III"/>
    <property type="match status" value="1"/>
</dbReference>
<dbReference type="FunFam" id="3.40.47.10:FF:000004">
    <property type="entry name" value="3-oxoacyl-[acyl-carrier-protein] synthase 3"/>
    <property type="match status" value="1"/>
</dbReference>
<dbReference type="Gene3D" id="3.40.47.10">
    <property type="match status" value="1"/>
</dbReference>
<dbReference type="HAMAP" id="MF_01815">
    <property type="entry name" value="FabH"/>
    <property type="match status" value="1"/>
</dbReference>
<dbReference type="InterPro" id="IPR013747">
    <property type="entry name" value="ACP_syn_III_C"/>
</dbReference>
<dbReference type="InterPro" id="IPR013751">
    <property type="entry name" value="ACP_syn_III_N"/>
</dbReference>
<dbReference type="InterPro" id="IPR004655">
    <property type="entry name" value="FabH"/>
</dbReference>
<dbReference type="InterPro" id="IPR016039">
    <property type="entry name" value="Thiolase-like"/>
</dbReference>
<dbReference type="NCBIfam" id="TIGR00747">
    <property type="entry name" value="fabH"/>
    <property type="match status" value="1"/>
</dbReference>
<dbReference type="NCBIfam" id="NF006829">
    <property type="entry name" value="PRK09352.1"/>
    <property type="match status" value="1"/>
</dbReference>
<dbReference type="PANTHER" id="PTHR43091">
    <property type="entry name" value="3-OXOACYL-[ACYL-CARRIER-PROTEIN] SYNTHASE"/>
    <property type="match status" value="1"/>
</dbReference>
<dbReference type="PANTHER" id="PTHR43091:SF1">
    <property type="entry name" value="BETA-KETOACYL-[ACYL-CARRIER-PROTEIN] SYNTHASE III, CHLOROPLASTIC"/>
    <property type="match status" value="1"/>
</dbReference>
<dbReference type="Pfam" id="PF08545">
    <property type="entry name" value="ACP_syn_III"/>
    <property type="match status" value="1"/>
</dbReference>
<dbReference type="Pfam" id="PF08541">
    <property type="entry name" value="ACP_syn_III_C"/>
    <property type="match status" value="1"/>
</dbReference>
<dbReference type="SUPFAM" id="SSF53901">
    <property type="entry name" value="Thiolase-like"/>
    <property type="match status" value="1"/>
</dbReference>
<organism>
    <name type="scientific">Clostridium perfringens (strain ATCC 13124 / DSM 756 / JCM 1290 / NCIMB 6125 / NCTC 8237 / Type A)</name>
    <dbReference type="NCBI Taxonomy" id="195103"/>
    <lineage>
        <taxon>Bacteria</taxon>
        <taxon>Bacillati</taxon>
        <taxon>Bacillota</taxon>
        <taxon>Clostridia</taxon>
        <taxon>Eubacteriales</taxon>
        <taxon>Clostridiaceae</taxon>
        <taxon>Clostridium</taxon>
    </lineage>
</organism>
<gene>
    <name evidence="1" type="primary">fabH</name>
    <name type="ordered locus">CPF_1324</name>
</gene>
<protein>
    <recommendedName>
        <fullName evidence="1">Beta-ketoacyl-[acyl-carrier-protein] synthase III</fullName>
        <shortName evidence="1">Beta-ketoacyl-ACP synthase III</shortName>
        <shortName evidence="1">KAS III</shortName>
        <ecNumber evidence="1">2.3.1.180</ecNumber>
    </recommendedName>
    <alternativeName>
        <fullName evidence="1">3-oxoacyl-[acyl-carrier-protein] synthase 3</fullName>
    </alternativeName>
    <alternativeName>
        <fullName evidence="1">3-oxoacyl-[acyl-carrier-protein] synthase III</fullName>
    </alternativeName>
</protein>
<accession>Q0TRH0</accession>
<reference key="1">
    <citation type="journal article" date="2006" name="Genome Res.">
        <title>Skewed genomic variability in strains of the toxigenic bacterial pathogen, Clostridium perfringens.</title>
        <authorList>
            <person name="Myers G.S.A."/>
            <person name="Rasko D.A."/>
            <person name="Cheung J.K."/>
            <person name="Ravel J."/>
            <person name="Seshadri R."/>
            <person name="DeBoy R.T."/>
            <person name="Ren Q."/>
            <person name="Varga J."/>
            <person name="Awad M.M."/>
            <person name="Brinkac L.M."/>
            <person name="Daugherty S.C."/>
            <person name="Haft D.H."/>
            <person name="Dodson R.J."/>
            <person name="Madupu R."/>
            <person name="Nelson W.C."/>
            <person name="Rosovitz M.J."/>
            <person name="Sullivan S.A."/>
            <person name="Khouri H."/>
            <person name="Dimitrov G.I."/>
            <person name="Watkins K.L."/>
            <person name="Mulligan S."/>
            <person name="Benton J."/>
            <person name="Radune D."/>
            <person name="Fisher D.J."/>
            <person name="Atkins H.S."/>
            <person name="Hiscox T."/>
            <person name="Jost B.H."/>
            <person name="Billington S.J."/>
            <person name="Songer J.G."/>
            <person name="McClane B.A."/>
            <person name="Titball R.W."/>
            <person name="Rood J.I."/>
            <person name="Melville S.B."/>
            <person name="Paulsen I.T."/>
        </authorList>
    </citation>
    <scope>NUCLEOTIDE SEQUENCE [LARGE SCALE GENOMIC DNA]</scope>
    <source>
        <strain>ATCC 13124 / DSM 756 / JCM 1290 / NCIMB 6125 / NCTC 8237 / S 107 / Type A</strain>
    </source>
</reference>
<feature type="chain" id="PRO_1000056348" description="Beta-ketoacyl-[acyl-carrier-protein] synthase III">
    <location>
        <begin position="1"/>
        <end position="324"/>
    </location>
</feature>
<feature type="region of interest" description="ACP-binding" evidence="1">
    <location>
        <begin position="252"/>
        <end position="256"/>
    </location>
</feature>
<feature type="active site" evidence="1">
    <location>
        <position position="112"/>
    </location>
</feature>
<feature type="active site" evidence="1">
    <location>
        <position position="251"/>
    </location>
</feature>
<feature type="active site" evidence="1">
    <location>
        <position position="281"/>
    </location>
</feature>